<gene>
    <name evidence="1" type="primary">hemH</name>
    <name type="ordered locus">Bxeno_A0496</name>
    <name type="ORF">Bxe_A3965</name>
</gene>
<protein>
    <recommendedName>
        <fullName evidence="1">Ferrochelatase</fullName>
        <ecNumber evidence="1">4.98.1.1</ecNumber>
    </recommendedName>
    <alternativeName>
        <fullName evidence="1">Heme synthase</fullName>
    </alternativeName>
    <alternativeName>
        <fullName evidence="1">Protoheme ferro-lyase</fullName>
    </alternativeName>
</protein>
<feature type="chain" id="PRO_1000059477" description="Ferrochelatase">
    <location>
        <begin position="1"/>
        <end position="356"/>
    </location>
</feature>
<feature type="binding site" evidence="1">
    <location>
        <position position="214"/>
    </location>
    <ligand>
        <name>Fe cation</name>
        <dbReference type="ChEBI" id="CHEBI:24875"/>
    </ligand>
</feature>
<feature type="binding site" evidence="1">
    <location>
        <position position="295"/>
    </location>
    <ligand>
        <name>Fe cation</name>
        <dbReference type="ChEBI" id="CHEBI:24875"/>
    </ligand>
</feature>
<keyword id="KW-0963">Cytoplasm</keyword>
<keyword id="KW-0350">Heme biosynthesis</keyword>
<keyword id="KW-0408">Iron</keyword>
<keyword id="KW-0456">Lyase</keyword>
<keyword id="KW-0479">Metal-binding</keyword>
<keyword id="KW-0627">Porphyrin biosynthesis</keyword>
<keyword id="KW-1185">Reference proteome</keyword>
<sequence>MRFDLERPSQNATSHRVAVLLINLGTPDAPTPRAVRRYLAQFLSDPRVVEIPALLWQIILRLLILPFRGSASAKKYAAVWMPEGSPLRVYTEKQVEGLRHLLQLNDYTVLVDYAMRYGTPGIPAMLNQLKLAGAERVLLMPMYPQYSSSTTATAFDDAFSALKRMRNQPEIRTVRQYADHPAYIAALAAQVHQYWHQHGRPDFAAGDKLVLSFHGVPKRTLDLGDPYHEQCQQTGALLMQALELTPVECRITFQSRFGKAEWLQPYTAPTLKELGAAGVRRADVFCPGFTADCLETIEEIGMEVRDEFLHAGGKDFHRIPCLNASQAWIAALGEIVAQNLQGWPVQALPVPHTTGA</sequence>
<organism>
    <name type="scientific">Paraburkholderia xenovorans (strain LB400)</name>
    <dbReference type="NCBI Taxonomy" id="266265"/>
    <lineage>
        <taxon>Bacteria</taxon>
        <taxon>Pseudomonadati</taxon>
        <taxon>Pseudomonadota</taxon>
        <taxon>Betaproteobacteria</taxon>
        <taxon>Burkholderiales</taxon>
        <taxon>Burkholderiaceae</taxon>
        <taxon>Paraburkholderia</taxon>
    </lineage>
</organism>
<name>HEMH_PARXL</name>
<proteinExistence type="inferred from homology"/>
<dbReference type="EC" id="4.98.1.1" evidence="1"/>
<dbReference type="EMBL" id="CP000270">
    <property type="protein sequence ID" value="ABE29034.1"/>
    <property type="molecule type" value="Genomic_DNA"/>
</dbReference>
<dbReference type="RefSeq" id="WP_011486856.1">
    <property type="nucleotide sequence ID" value="NC_007951.1"/>
</dbReference>
<dbReference type="SMR" id="Q145F5"/>
<dbReference type="STRING" id="266265.Bxe_A3965"/>
<dbReference type="KEGG" id="bxb:DR64_1641"/>
<dbReference type="KEGG" id="bxe:Bxe_A3965"/>
<dbReference type="PATRIC" id="fig|266265.5.peg.527"/>
<dbReference type="eggNOG" id="COG0276">
    <property type="taxonomic scope" value="Bacteria"/>
</dbReference>
<dbReference type="OrthoDB" id="9809741at2"/>
<dbReference type="UniPathway" id="UPA00252">
    <property type="reaction ID" value="UER00325"/>
</dbReference>
<dbReference type="Proteomes" id="UP000001817">
    <property type="component" value="Chromosome 1"/>
</dbReference>
<dbReference type="GO" id="GO:0005737">
    <property type="term" value="C:cytoplasm"/>
    <property type="evidence" value="ECO:0007669"/>
    <property type="project" value="UniProtKB-SubCell"/>
</dbReference>
<dbReference type="GO" id="GO:0004325">
    <property type="term" value="F:ferrochelatase activity"/>
    <property type="evidence" value="ECO:0007669"/>
    <property type="project" value="UniProtKB-UniRule"/>
</dbReference>
<dbReference type="GO" id="GO:0046872">
    <property type="term" value="F:metal ion binding"/>
    <property type="evidence" value="ECO:0007669"/>
    <property type="project" value="UniProtKB-KW"/>
</dbReference>
<dbReference type="GO" id="GO:0006783">
    <property type="term" value="P:heme biosynthetic process"/>
    <property type="evidence" value="ECO:0007669"/>
    <property type="project" value="UniProtKB-UniRule"/>
</dbReference>
<dbReference type="CDD" id="cd00419">
    <property type="entry name" value="Ferrochelatase_C"/>
    <property type="match status" value="1"/>
</dbReference>
<dbReference type="CDD" id="cd03411">
    <property type="entry name" value="Ferrochelatase_N"/>
    <property type="match status" value="1"/>
</dbReference>
<dbReference type="FunFam" id="3.40.50.1400:FF:000002">
    <property type="entry name" value="Ferrochelatase"/>
    <property type="match status" value="1"/>
</dbReference>
<dbReference type="Gene3D" id="3.40.50.1400">
    <property type="match status" value="2"/>
</dbReference>
<dbReference type="HAMAP" id="MF_00323">
    <property type="entry name" value="Ferrochelatase"/>
    <property type="match status" value="1"/>
</dbReference>
<dbReference type="InterPro" id="IPR001015">
    <property type="entry name" value="Ferrochelatase"/>
</dbReference>
<dbReference type="InterPro" id="IPR019772">
    <property type="entry name" value="Ferrochelatase_AS"/>
</dbReference>
<dbReference type="InterPro" id="IPR033644">
    <property type="entry name" value="Ferrochelatase_C"/>
</dbReference>
<dbReference type="InterPro" id="IPR033659">
    <property type="entry name" value="Ferrochelatase_N"/>
</dbReference>
<dbReference type="NCBIfam" id="TIGR00109">
    <property type="entry name" value="hemH"/>
    <property type="match status" value="1"/>
</dbReference>
<dbReference type="PANTHER" id="PTHR11108">
    <property type="entry name" value="FERROCHELATASE"/>
    <property type="match status" value="1"/>
</dbReference>
<dbReference type="PANTHER" id="PTHR11108:SF1">
    <property type="entry name" value="FERROCHELATASE, MITOCHONDRIAL"/>
    <property type="match status" value="1"/>
</dbReference>
<dbReference type="Pfam" id="PF00762">
    <property type="entry name" value="Ferrochelatase"/>
    <property type="match status" value="1"/>
</dbReference>
<dbReference type="SUPFAM" id="SSF53800">
    <property type="entry name" value="Chelatase"/>
    <property type="match status" value="1"/>
</dbReference>
<dbReference type="PROSITE" id="PS00534">
    <property type="entry name" value="FERROCHELATASE"/>
    <property type="match status" value="1"/>
</dbReference>
<accession>Q145F5</accession>
<evidence type="ECO:0000255" key="1">
    <source>
        <dbReference type="HAMAP-Rule" id="MF_00323"/>
    </source>
</evidence>
<reference key="1">
    <citation type="journal article" date="2006" name="Proc. Natl. Acad. Sci. U.S.A.">
        <title>Burkholderia xenovorans LB400 harbors a multi-replicon, 9.73-Mbp genome shaped for versatility.</title>
        <authorList>
            <person name="Chain P.S.G."/>
            <person name="Denef V.J."/>
            <person name="Konstantinidis K.T."/>
            <person name="Vergez L.M."/>
            <person name="Agullo L."/>
            <person name="Reyes V.L."/>
            <person name="Hauser L."/>
            <person name="Cordova M."/>
            <person name="Gomez L."/>
            <person name="Gonzalez M."/>
            <person name="Land M."/>
            <person name="Lao V."/>
            <person name="Larimer F."/>
            <person name="LiPuma J.J."/>
            <person name="Mahenthiralingam E."/>
            <person name="Malfatti S.A."/>
            <person name="Marx C.J."/>
            <person name="Parnell J.J."/>
            <person name="Ramette A."/>
            <person name="Richardson P."/>
            <person name="Seeger M."/>
            <person name="Smith D."/>
            <person name="Spilker T."/>
            <person name="Sul W.J."/>
            <person name="Tsoi T.V."/>
            <person name="Ulrich L.E."/>
            <person name="Zhulin I.B."/>
            <person name="Tiedje J.M."/>
        </authorList>
    </citation>
    <scope>NUCLEOTIDE SEQUENCE [LARGE SCALE GENOMIC DNA]</scope>
    <source>
        <strain>LB400</strain>
    </source>
</reference>
<comment type="function">
    <text evidence="1">Catalyzes the ferrous insertion into protoporphyrin IX.</text>
</comment>
<comment type="catalytic activity">
    <reaction evidence="1">
        <text>heme b + 2 H(+) = protoporphyrin IX + Fe(2+)</text>
        <dbReference type="Rhea" id="RHEA:22584"/>
        <dbReference type="ChEBI" id="CHEBI:15378"/>
        <dbReference type="ChEBI" id="CHEBI:29033"/>
        <dbReference type="ChEBI" id="CHEBI:57306"/>
        <dbReference type="ChEBI" id="CHEBI:60344"/>
        <dbReference type="EC" id="4.98.1.1"/>
    </reaction>
</comment>
<comment type="pathway">
    <text evidence="1">Porphyrin-containing compound metabolism; protoheme biosynthesis; protoheme from protoporphyrin-IX: step 1/1.</text>
</comment>
<comment type="subcellular location">
    <subcellularLocation>
        <location evidence="1">Cytoplasm</location>
    </subcellularLocation>
</comment>
<comment type="similarity">
    <text evidence="1">Belongs to the ferrochelatase family.</text>
</comment>